<evidence type="ECO:0000255" key="1">
    <source>
        <dbReference type="HAMAP-Rule" id="MF_01684"/>
    </source>
</evidence>
<evidence type="ECO:0007829" key="2">
    <source>
        <dbReference type="PDB" id="3DP9"/>
    </source>
</evidence>
<protein>
    <recommendedName>
        <fullName evidence="1">5'-methylthioadenosine/S-adenosylhomocysteine nucleosidase</fullName>
        <shortName evidence="1">MTA/SAH nucleosidase</shortName>
        <shortName evidence="1">MTAN</shortName>
        <ecNumber evidence="1">3.2.2.9</ecNumber>
    </recommendedName>
    <alternativeName>
        <fullName evidence="1">5'-deoxyadenosine nucleosidase</fullName>
        <shortName evidence="1">DOA nucleosidase</shortName>
        <shortName evidence="1">dAdo nucleosidase</shortName>
    </alternativeName>
    <alternativeName>
        <fullName evidence="1">5'-methylthioadenosine nucleosidase</fullName>
        <shortName evidence="1">MTA nucleosidase</shortName>
    </alternativeName>
    <alternativeName>
        <fullName evidence="1">S-adenosylhomocysteine nucleosidase</fullName>
        <shortName evidence="1">AdoHcy nucleosidase</shortName>
        <shortName evidence="1">SAH nucleosidase</shortName>
        <shortName evidence="1">SRH nucleosidase</shortName>
    </alternativeName>
</protein>
<name>MTNN_VIBCH</name>
<feature type="chain" id="PRO_0000359381" description="5'-methylthioadenosine/S-adenosylhomocysteine nucleosidase">
    <location>
        <begin position="1"/>
        <end position="231"/>
    </location>
</feature>
<feature type="active site" description="Proton acceptor" evidence="1">
    <location>
        <position position="12"/>
    </location>
</feature>
<feature type="active site" description="Proton donor" evidence="1">
    <location>
        <position position="198"/>
    </location>
</feature>
<feature type="binding site" evidence="1">
    <location>
        <position position="78"/>
    </location>
    <ligand>
        <name>substrate</name>
    </ligand>
</feature>
<feature type="binding site" evidence="1">
    <location>
        <position position="153"/>
    </location>
    <ligand>
        <name>substrate</name>
    </ligand>
</feature>
<feature type="binding site" evidence="1">
    <location>
        <begin position="174"/>
        <end position="175"/>
    </location>
    <ligand>
        <name>substrate</name>
    </ligand>
</feature>
<feature type="strand" evidence="2">
    <location>
        <begin position="3"/>
        <end position="9"/>
    </location>
</feature>
<feature type="helix" evidence="2">
    <location>
        <begin position="10"/>
        <end position="17"/>
    </location>
</feature>
<feature type="strand" evidence="2">
    <location>
        <begin position="21"/>
        <end position="28"/>
    </location>
</feature>
<feature type="strand" evidence="2">
    <location>
        <begin position="31"/>
        <end position="38"/>
    </location>
</feature>
<feature type="strand" evidence="2">
    <location>
        <begin position="41"/>
        <end position="47"/>
    </location>
</feature>
<feature type="helix" evidence="2">
    <location>
        <begin position="52"/>
        <end position="66"/>
    </location>
</feature>
<feature type="strand" evidence="2">
    <location>
        <begin position="69"/>
        <end position="79"/>
    </location>
</feature>
<feature type="strand" evidence="2">
    <location>
        <begin position="89"/>
        <end position="97"/>
    </location>
</feature>
<feature type="helix" evidence="2">
    <location>
        <begin position="103"/>
        <end position="105"/>
    </location>
</feature>
<feature type="strand" evidence="2">
    <location>
        <begin position="117"/>
        <end position="120"/>
    </location>
</feature>
<feature type="helix" evidence="2">
    <location>
        <begin position="123"/>
        <end position="133"/>
    </location>
</feature>
<feature type="strand" evidence="2">
    <location>
        <begin position="141"/>
        <end position="148"/>
    </location>
</feature>
<feature type="helix" evidence="2">
    <location>
        <begin position="156"/>
        <end position="165"/>
    </location>
</feature>
<feature type="strand" evidence="2">
    <location>
        <begin position="169"/>
        <end position="175"/>
    </location>
</feature>
<feature type="helix" evidence="2">
    <location>
        <begin position="176"/>
        <end position="186"/>
    </location>
</feature>
<feature type="strand" evidence="2">
    <location>
        <begin position="190"/>
        <end position="198"/>
    </location>
</feature>
<feature type="helix" evidence="2">
    <location>
        <begin position="204"/>
        <end position="228"/>
    </location>
</feature>
<gene>
    <name evidence="1" type="primary">mtnN</name>
    <name type="ordered locus">VC_2379</name>
</gene>
<keyword id="KW-0002">3D-structure</keyword>
<keyword id="KW-0028">Amino-acid biosynthesis</keyword>
<keyword id="KW-0378">Hydrolase</keyword>
<keyword id="KW-0486">Methionine biosynthesis</keyword>
<keyword id="KW-1185">Reference proteome</keyword>
<dbReference type="EC" id="3.2.2.9" evidence="1"/>
<dbReference type="EMBL" id="AE003852">
    <property type="protein sequence ID" value="AAF95522.1"/>
    <property type="molecule type" value="Genomic_DNA"/>
</dbReference>
<dbReference type="PIR" id="A82084">
    <property type="entry name" value="A82084"/>
</dbReference>
<dbReference type="RefSeq" id="NP_232009.1">
    <property type="nucleotide sequence ID" value="NC_002505.1"/>
</dbReference>
<dbReference type="RefSeq" id="WP_000689868.1">
    <property type="nucleotide sequence ID" value="NZ_LT906614.1"/>
</dbReference>
<dbReference type="PDB" id="3DP9">
    <property type="method" value="X-ray"/>
    <property type="resolution" value="2.30 A"/>
    <property type="chains" value="A/C=1-231"/>
</dbReference>
<dbReference type="PDBsum" id="3DP9"/>
<dbReference type="SMR" id="Q9KPI8"/>
<dbReference type="STRING" id="243277.VC_2379"/>
<dbReference type="ChEMBL" id="CHEMBL1250374"/>
<dbReference type="DrugBank" id="DB07463">
    <property type="generic name" value="(3R,4S)-1-[(4-amino-5H-pyrrolo[3,2-d]pyrimidin-7-yl)methyl]-4-[(butylsulfanyl)methyl]pyrrolidin-3-ol"/>
</dbReference>
<dbReference type="DNASU" id="2613048"/>
<dbReference type="EnsemblBacteria" id="AAF95522">
    <property type="protein sequence ID" value="AAF95522"/>
    <property type="gene ID" value="VC_2379"/>
</dbReference>
<dbReference type="GeneID" id="88783192"/>
<dbReference type="KEGG" id="vch:VC_2379"/>
<dbReference type="PATRIC" id="fig|243277.26.peg.2265"/>
<dbReference type="eggNOG" id="COG0775">
    <property type="taxonomic scope" value="Bacteria"/>
</dbReference>
<dbReference type="HOGENOM" id="CLU_031248_2_2_6"/>
<dbReference type="BioCyc" id="MetaCyc:MONOMER-14562"/>
<dbReference type="BRENDA" id="3.2.2.9">
    <property type="organism ID" value="6626"/>
</dbReference>
<dbReference type="UniPathway" id="UPA00904">
    <property type="reaction ID" value="UER00871"/>
</dbReference>
<dbReference type="EvolutionaryTrace" id="Q9KPI8"/>
<dbReference type="PRO" id="PR:Q9KPI8"/>
<dbReference type="Proteomes" id="UP000000584">
    <property type="component" value="Chromosome 1"/>
</dbReference>
<dbReference type="GO" id="GO:0005829">
    <property type="term" value="C:cytosol"/>
    <property type="evidence" value="ECO:0000318"/>
    <property type="project" value="GO_Central"/>
</dbReference>
<dbReference type="GO" id="GO:0008782">
    <property type="term" value="F:adenosylhomocysteine nucleosidase activity"/>
    <property type="evidence" value="ECO:0000318"/>
    <property type="project" value="GO_Central"/>
</dbReference>
<dbReference type="GO" id="GO:0008930">
    <property type="term" value="F:methylthioadenosine nucleosidase activity"/>
    <property type="evidence" value="ECO:0000318"/>
    <property type="project" value="GO_Central"/>
</dbReference>
<dbReference type="GO" id="GO:0019509">
    <property type="term" value="P:L-methionine salvage from methylthioadenosine"/>
    <property type="evidence" value="ECO:0007669"/>
    <property type="project" value="UniProtKB-UniRule"/>
</dbReference>
<dbReference type="GO" id="GO:0019284">
    <property type="term" value="P:L-methionine salvage from S-adenosylmethionine"/>
    <property type="evidence" value="ECO:0000318"/>
    <property type="project" value="GO_Central"/>
</dbReference>
<dbReference type="GO" id="GO:0009164">
    <property type="term" value="P:nucleoside catabolic process"/>
    <property type="evidence" value="ECO:0007669"/>
    <property type="project" value="InterPro"/>
</dbReference>
<dbReference type="CDD" id="cd09008">
    <property type="entry name" value="MTAN"/>
    <property type="match status" value="1"/>
</dbReference>
<dbReference type="FunFam" id="3.40.50.1580:FF:000001">
    <property type="entry name" value="MTA/SAH nucleosidase family protein"/>
    <property type="match status" value="1"/>
</dbReference>
<dbReference type="Gene3D" id="3.40.50.1580">
    <property type="entry name" value="Nucleoside phosphorylase domain"/>
    <property type="match status" value="1"/>
</dbReference>
<dbReference type="HAMAP" id="MF_01684">
    <property type="entry name" value="Salvage_MtnN"/>
    <property type="match status" value="1"/>
</dbReference>
<dbReference type="InterPro" id="IPR010049">
    <property type="entry name" value="MTA_SAH_Nsdase"/>
</dbReference>
<dbReference type="InterPro" id="IPR000845">
    <property type="entry name" value="Nucleoside_phosphorylase_d"/>
</dbReference>
<dbReference type="InterPro" id="IPR035994">
    <property type="entry name" value="Nucleoside_phosphorylase_sf"/>
</dbReference>
<dbReference type="NCBIfam" id="TIGR01704">
    <property type="entry name" value="MTA_SAH-Nsdase"/>
    <property type="match status" value="1"/>
</dbReference>
<dbReference type="NCBIfam" id="NF004079">
    <property type="entry name" value="PRK05584.1"/>
    <property type="match status" value="1"/>
</dbReference>
<dbReference type="PANTHER" id="PTHR46832">
    <property type="entry name" value="5'-METHYLTHIOADENOSINE/S-ADENOSYLHOMOCYSTEINE NUCLEOSIDASE"/>
    <property type="match status" value="1"/>
</dbReference>
<dbReference type="PANTHER" id="PTHR46832:SF1">
    <property type="entry name" value="5'-METHYLTHIOADENOSINE_S-ADENOSYLHOMOCYSTEINE NUCLEOSIDASE"/>
    <property type="match status" value="1"/>
</dbReference>
<dbReference type="Pfam" id="PF01048">
    <property type="entry name" value="PNP_UDP_1"/>
    <property type="match status" value="1"/>
</dbReference>
<dbReference type="SUPFAM" id="SSF53167">
    <property type="entry name" value="Purine and uridine phosphorylases"/>
    <property type="match status" value="1"/>
</dbReference>
<organism>
    <name type="scientific">Vibrio cholerae serotype O1 (strain ATCC 39315 / El Tor Inaba N16961)</name>
    <dbReference type="NCBI Taxonomy" id="243277"/>
    <lineage>
        <taxon>Bacteria</taxon>
        <taxon>Pseudomonadati</taxon>
        <taxon>Pseudomonadota</taxon>
        <taxon>Gammaproteobacteria</taxon>
        <taxon>Vibrionales</taxon>
        <taxon>Vibrionaceae</taxon>
        <taxon>Vibrio</taxon>
    </lineage>
</organism>
<reference key="1">
    <citation type="journal article" date="2000" name="Nature">
        <title>DNA sequence of both chromosomes of the cholera pathogen Vibrio cholerae.</title>
        <authorList>
            <person name="Heidelberg J.F."/>
            <person name="Eisen J.A."/>
            <person name="Nelson W.C."/>
            <person name="Clayton R.A."/>
            <person name="Gwinn M.L."/>
            <person name="Dodson R.J."/>
            <person name="Haft D.H."/>
            <person name="Hickey E.K."/>
            <person name="Peterson J.D."/>
            <person name="Umayam L.A."/>
            <person name="Gill S.R."/>
            <person name="Nelson K.E."/>
            <person name="Read T.D."/>
            <person name="Tettelin H."/>
            <person name="Richardson D.L."/>
            <person name="Ermolaeva M.D."/>
            <person name="Vamathevan J.J."/>
            <person name="Bass S."/>
            <person name="Qin H."/>
            <person name="Dragoi I."/>
            <person name="Sellers P."/>
            <person name="McDonald L.A."/>
            <person name="Utterback T.R."/>
            <person name="Fleischmann R.D."/>
            <person name="Nierman W.C."/>
            <person name="White O."/>
            <person name="Salzberg S.L."/>
            <person name="Smith H.O."/>
            <person name="Colwell R.R."/>
            <person name="Mekalanos J.J."/>
            <person name="Venter J.C."/>
            <person name="Fraser C.M."/>
        </authorList>
    </citation>
    <scope>NUCLEOTIDE SEQUENCE [LARGE SCALE GENOMIC DNA]</scope>
    <source>
        <strain>ATCC 39315 / El Tor Inaba N16961</strain>
    </source>
</reference>
<comment type="function">
    <text evidence="1">Catalyzes the irreversible cleavage of the glycosidic bond in both 5'-methylthioadenosine (MTA) and S-adenosylhomocysteine (SAH/AdoHcy) to adenine and the corresponding thioribose, 5'-methylthioribose and S-ribosylhomocysteine, respectively. Also cleaves 5'-deoxyadenosine, a toxic by-product of radical S-adenosylmethionine (SAM) enzymes, into 5-deoxyribose and adenine.</text>
</comment>
<comment type="catalytic activity">
    <reaction evidence="1">
        <text>S-adenosyl-L-homocysteine + H2O = S-(5-deoxy-D-ribos-5-yl)-L-homocysteine + adenine</text>
        <dbReference type="Rhea" id="RHEA:17805"/>
        <dbReference type="ChEBI" id="CHEBI:15377"/>
        <dbReference type="ChEBI" id="CHEBI:16708"/>
        <dbReference type="ChEBI" id="CHEBI:57856"/>
        <dbReference type="ChEBI" id="CHEBI:58195"/>
        <dbReference type="EC" id="3.2.2.9"/>
    </reaction>
</comment>
<comment type="catalytic activity">
    <reaction evidence="1">
        <text>S-methyl-5'-thioadenosine + H2O = 5-(methylsulfanyl)-D-ribose + adenine</text>
        <dbReference type="Rhea" id="RHEA:13617"/>
        <dbReference type="ChEBI" id="CHEBI:15377"/>
        <dbReference type="ChEBI" id="CHEBI:16708"/>
        <dbReference type="ChEBI" id="CHEBI:17509"/>
        <dbReference type="ChEBI" id="CHEBI:78440"/>
        <dbReference type="EC" id="3.2.2.9"/>
    </reaction>
</comment>
<comment type="catalytic activity">
    <reaction evidence="1">
        <text>5'-deoxyadenosine + H2O = 5-deoxy-D-ribose + adenine</text>
        <dbReference type="Rhea" id="RHEA:29859"/>
        <dbReference type="ChEBI" id="CHEBI:15377"/>
        <dbReference type="ChEBI" id="CHEBI:16708"/>
        <dbReference type="ChEBI" id="CHEBI:17319"/>
        <dbReference type="ChEBI" id="CHEBI:149540"/>
        <dbReference type="EC" id="3.2.2.9"/>
    </reaction>
    <physiologicalReaction direction="left-to-right" evidence="1">
        <dbReference type="Rhea" id="RHEA:29860"/>
    </physiologicalReaction>
</comment>
<comment type="pathway">
    <text evidence="1">Amino-acid biosynthesis; L-methionine biosynthesis via salvage pathway; S-methyl-5-thio-alpha-D-ribose 1-phosphate from S-methyl-5'-thioadenosine (hydrolase route): step 1/2.</text>
</comment>
<comment type="similarity">
    <text evidence="1">Belongs to the PNP/UDP phosphorylase family. MtnN subfamily.</text>
</comment>
<sequence length="231" mass="24525">MKIGIIGAMQQEVAILKDLIEDVQEVNQAGCTFYSGQIQGVDVVLLQSGIGKVSAALGTALLISQYAPDVVINTGSAGGFDASLNVGDVVISSEVRHHDADVTAFGYEIGQMAGQPAAFKADEKLMTVAEQALAQLPNTHAVRGLICTGDAFVCTAERQQFIRQHFPSVVAVEMEASAIAQTCHQFKVPFVVVRAISDVADKESPLSFEEFLPLAAKSSSAMVLKMVELLK</sequence>
<proteinExistence type="evidence at protein level"/>
<accession>Q9KPI8</accession>